<comment type="function">
    <text>Involved in methylamine metabolism. Essential for the maturation of the beta subunit of MADH, presumably via a step in the biosynthesis of tryptophan tryptophylquinone (TTQ), the cofactor of MADH.</text>
</comment>
<comment type="pathway">
    <text>One-carbon metabolism; methylamine degradation.</text>
</comment>
<comment type="subcellular location">
    <subcellularLocation>
        <location>Periplasm</location>
    </subcellularLocation>
</comment>
<comment type="PTM">
    <text evidence="3">Binds 2 heme c groups covalently per subunit.</text>
</comment>
<protein>
    <recommendedName>
        <fullName>Methylamine utilization protein MauG</fullName>
        <ecNumber>1.-.-.-</ecNumber>
    </recommendedName>
</protein>
<gene>
    <name type="primary">mauG</name>
    <name type="ordered locus">Pden_4736</name>
</gene>
<feature type="signal peptide" evidence="1">
    <location>
        <begin position="1"/>
        <end position="20"/>
    </location>
</feature>
<feature type="chain" id="PRO_0000006603" description="Methylamine utilization protein MauG">
    <location>
        <begin position="21"/>
        <end position="387"/>
    </location>
</feature>
<feature type="binding site" description="covalent" evidence="2">
    <location>
        <position position="51"/>
    </location>
    <ligand>
        <name>heme c</name>
        <dbReference type="ChEBI" id="CHEBI:61717"/>
        <label>1</label>
    </ligand>
</feature>
<feature type="binding site" description="covalent" evidence="2">
    <location>
        <position position="54"/>
    </location>
    <ligand>
        <name>heme c</name>
        <dbReference type="ChEBI" id="CHEBI:61717"/>
        <label>1</label>
    </ligand>
</feature>
<feature type="binding site" description="axial binding residue" evidence="2">
    <location>
        <position position="55"/>
    </location>
    <ligand>
        <name>heme c</name>
        <dbReference type="ChEBI" id="CHEBI:61717"/>
        <label>1</label>
    </ligand>
    <ligandPart>
        <name>Fe</name>
        <dbReference type="ChEBI" id="CHEBI:18248"/>
    </ligandPart>
</feature>
<feature type="binding site" description="covalent" evidence="2">
    <location>
        <position position="221"/>
    </location>
    <ligand>
        <name>heme c</name>
        <dbReference type="ChEBI" id="CHEBI:61717"/>
        <label>2</label>
    </ligand>
</feature>
<feature type="binding site" description="covalent" evidence="2">
    <location>
        <position position="224"/>
    </location>
    <ligand>
        <name>heme c</name>
        <dbReference type="ChEBI" id="CHEBI:61717"/>
        <label>2</label>
    </ligand>
</feature>
<feature type="binding site" description="axial binding residue" evidence="2">
    <location>
        <position position="225"/>
    </location>
    <ligand>
        <name>heme c</name>
        <dbReference type="ChEBI" id="CHEBI:61717"/>
        <label>2</label>
    </ligand>
    <ligandPart>
        <name>Fe</name>
        <dbReference type="ChEBI" id="CHEBI:18248"/>
    </ligandPart>
</feature>
<feature type="binding site" description="axial binding residue" evidence="2">
    <location>
        <position position="300"/>
    </location>
    <ligand>
        <name>heme c</name>
        <dbReference type="ChEBI" id="CHEBI:61717"/>
        <label>1</label>
    </ligand>
    <ligandPart>
        <name>Fe</name>
        <dbReference type="ChEBI" id="CHEBI:18248"/>
    </ligandPart>
</feature>
<feature type="helix" evidence="5">
    <location>
        <begin position="26"/>
        <end position="38"/>
    </location>
</feature>
<feature type="helix" evidence="5">
    <location>
        <begin position="41"/>
        <end position="43"/>
    </location>
</feature>
<feature type="helix" evidence="5">
    <location>
        <begin position="51"/>
        <end position="54"/>
    </location>
</feature>
<feature type="helix" evidence="5">
    <location>
        <begin position="57"/>
        <end position="59"/>
    </location>
</feature>
<feature type="helix" evidence="5">
    <location>
        <begin position="93"/>
        <end position="95"/>
    </location>
</feature>
<feature type="strand" evidence="4">
    <location>
        <begin position="99"/>
        <end position="101"/>
    </location>
</feature>
<feature type="strand" evidence="5">
    <location>
        <begin position="117"/>
        <end position="119"/>
    </location>
</feature>
<feature type="helix" evidence="5">
    <location>
        <begin position="120"/>
        <end position="129"/>
    </location>
</feature>
<feature type="turn" evidence="5">
    <location>
        <begin position="131"/>
        <end position="134"/>
    </location>
</feature>
<feature type="helix" evidence="5">
    <location>
        <begin position="139"/>
        <end position="148"/>
    </location>
</feature>
<feature type="helix" evidence="5">
    <location>
        <begin position="150"/>
        <end position="160"/>
    </location>
</feature>
<feature type="helix" evidence="5">
    <location>
        <begin position="164"/>
        <end position="166"/>
    </location>
</feature>
<feature type="helix" evidence="5">
    <location>
        <begin position="168"/>
        <end position="183"/>
    </location>
</feature>
<feature type="helix" evidence="5">
    <location>
        <begin position="186"/>
        <end position="188"/>
    </location>
</feature>
<feature type="helix" evidence="5">
    <location>
        <begin position="194"/>
        <end position="199"/>
    </location>
</feature>
<feature type="helix" evidence="5">
    <location>
        <begin position="207"/>
        <end position="218"/>
    </location>
</feature>
<feature type="helix" evidence="5">
    <location>
        <begin position="220"/>
        <end position="223"/>
    </location>
</feature>
<feature type="strand" evidence="5">
    <location>
        <begin position="225"/>
        <end position="227"/>
    </location>
</feature>
<feature type="strand" evidence="5">
    <location>
        <begin position="229"/>
        <end position="231"/>
    </location>
</feature>
<feature type="strand" evidence="5">
    <location>
        <begin position="242"/>
        <end position="245"/>
    </location>
</feature>
<feature type="helix" evidence="5">
    <location>
        <begin position="252"/>
        <end position="258"/>
    </location>
</feature>
<feature type="helix" evidence="5">
    <location>
        <begin position="268"/>
        <end position="271"/>
    </location>
</feature>
<feature type="helix" evidence="5">
    <location>
        <begin position="278"/>
        <end position="280"/>
    </location>
</feature>
<feature type="helix" evidence="5">
    <location>
        <begin position="292"/>
        <end position="294"/>
    </location>
</feature>
<feature type="strand" evidence="5">
    <location>
        <begin position="297"/>
        <end position="299"/>
    </location>
</feature>
<feature type="strand" evidence="6">
    <location>
        <begin position="304"/>
        <end position="306"/>
    </location>
</feature>
<feature type="helix" evidence="5">
    <location>
        <begin position="307"/>
        <end position="313"/>
    </location>
</feature>
<feature type="helix" evidence="5">
    <location>
        <begin position="314"/>
        <end position="317"/>
    </location>
</feature>
<feature type="helix" evidence="5">
    <location>
        <begin position="322"/>
        <end position="325"/>
    </location>
</feature>
<feature type="turn" evidence="5">
    <location>
        <begin position="328"/>
        <end position="330"/>
    </location>
</feature>
<feature type="strand" evidence="5">
    <location>
        <begin position="331"/>
        <end position="333"/>
    </location>
</feature>
<feature type="strand" evidence="5">
    <location>
        <begin position="341"/>
        <end position="343"/>
    </location>
</feature>
<feature type="helix" evidence="5">
    <location>
        <begin position="345"/>
        <end position="348"/>
    </location>
</feature>
<feature type="helix" evidence="5">
    <location>
        <begin position="356"/>
        <end position="367"/>
    </location>
</feature>
<feature type="helix" evidence="5">
    <location>
        <begin position="372"/>
        <end position="378"/>
    </location>
</feature>
<proteinExistence type="evidence at protein level"/>
<name>MAUG_PARDP</name>
<geneLocation type="plasmid">
    <name>pPD1222</name>
</geneLocation>
<reference key="1">
    <citation type="journal article" date="1995" name="Eur. J. Biochem.">
        <title>Mutational analysis of mau genes involved in methylamine metabolism in Paracoccus denitrificans.</title>
        <authorList>
            <person name="van der Palen C.J."/>
            <person name="Slotboom D.J."/>
            <person name="Jongejan L."/>
            <person name="Reijnders W.N."/>
            <person name="Harms N."/>
            <person name="Duine J.A."/>
            <person name="van Spanning R.J."/>
        </authorList>
    </citation>
    <scope>NUCLEOTIDE SEQUENCE [GENOMIC DNA]</scope>
</reference>
<reference key="2">
    <citation type="submission" date="2006-12" db="EMBL/GenBank/DDBJ databases">
        <title>Complete sequence of plasmid 1 of Paracoccus denitrificans PD1222.</title>
        <authorList>
            <person name="Copeland A."/>
            <person name="Lucas S."/>
            <person name="Lapidus A."/>
            <person name="Barry K."/>
            <person name="Detter J.C."/>
            <person name="Glavina del Rio T."/>
            <person name="Hammon N."/>
            <person name="Israni S."/>
            <person name="Dalin E."/>
            <person name="Tice H."/>
            <person name="Pitluck S."/>
            <person name="Munk A.C."/>
            <person name="Brettin T."/>
            <person name="Bruce D."/>
            <person name="Han C."/>
            <person name="Tapia R."/>
            <person name="Gilna P."/>
            <person name="Schmutz J."/>
            <person name="Larimer F."/>
            <person name="Land M."/>
            <person name="Hauser L."/>
            <person name="Kyrpides N."/>
            <person name="Lykidis A."/>
            <person name="Spiro S."/>
            <person name="Richardson D.J."/>
            <person name="Moir J.W.B."/>
            <person name="Ferguson S.J."/>
            <person name="van Spanning R.J.M."/>
            <person name="Richardson P."/>
        </authorList>
    </citation>
    <scope>NUCLEOTIDE SEQUENCE [LARGE SCALE GENOMIC DNA]</scope>
    <source>
        <strain>Pd 1222</strain>
    </source>
</reference>
<dbReference type="EC" id="1.-.-.-"/>
<dbReference type="EMBL" id="U15028">
    <property type="protein sequence ID" value="AAA86467.1"/>
    <property type="molecule type" value="Genomic_DNA"/>
</dbReference>
<dbReference type="EMBL" id="CP000491">
    <property type="protein sequence ID" value="ABL72797.1"/>
    <property type="molecule type" value="Genomic_DNA"/>
</dbReference>
<dbReference type="PIR" id="S65959">
    <property type="entry name" value="S65959"/>
</dbReference>
<dbReference type="RefSeq" id="WP_011750956.1">
    <property type="nucleotide sequence ID" value="NC_008688.1"/>
</dbReference>
<dbReference type="PDB" id="3L4M">
    <property type="method" value="X-ray"/>
    <property type="resolution" value="2.02 A"/>
    <property type="chains" value="A/B=21-387"/>
</dbReference>
<dbReference type="PDB" id="3L4O">
    <property type="method" value="X-ray"/>
    <property type="resolution" value="2.05 A"/>
    <property type="chains" value="A/B=21-387"/>
</dbReference>
<dbReference type="PDB" id="3ORV">
    <property type="method" value="X-ray"/>
    <property type="resolution" value="1.91 A"/>
    <property type="chains" value="A/B=21-387"/>
</dbReference>
<dbReference type="PDB" id="3PXS">
    <property type="method" value="X-ray"/>
    <property type="resolution" value="2.22 A"/>
    <property type="chains" value="A/B=21-387"/>
</dbReference>
<dbReference type="PDB" id="3PXT">
    <property type="method" value="X-ray"/>
    <property type="resolution" value="2.16 A"/>
    <property type="chains" value="A/B=21-387"/>
</dbReference>
<dbReference type="PDB" id="3PXW">
    <property type="method" value="X-ray"/>
    <property type="resolution" value="2.11 A"/>
    <property type="chains" value="A/B=21-387"/>
</dbReference>
<dbReference type="PDB" id="3RLM">
    <property type="method" value="X-ray"/>
    <property type="resolution" value="2.13 A"/>
    <property type="chains" value="A/B=21-387"/>
</dbReference>
<dbReference type="PDB" id="3RMZ">
    <property type="method" value="X-ray"/>
    <property type="resolution" value="1.72 A"/>
    <property type="chains" value="A/B=21-387"/>
</dbReference>
<dbReference type="PDB" id="3RN0">
    <property type="method" value="X-ray"/>
    <property type="resolution" value="1.91 A"/>
    <property type="chains" value="A/B=21-387"/>
</dbReference>
<dbReference type="PDB" id="3RN1">
    <property type="method" value="X-ray"/>
    <property type="resolution" value="1.93 A"/>
    <property type="chains" value="A/B=21-387"/>
</dbReference>
<dbReference type="PDB" id="3SJL">
    <property type="method" value="X-ray"/>
    <property type="resolution" value="1.63 A"/>
    <property type="chains" value="A/B=21-387"/>
</dbReference>
<dbReference type="PDB" id="3SLE">
    <property type="method" value="X-ray"/>
    <property type="resolution" value="2.52 A"/>
    <property type="chains" value="A/B=21-387"/>
</dbReference>
<dbReference type="PDB" id="3SVW">
    <property type="method" value="X-ray"/>
    <property type="resolution" value="1.86 A"/>
    <property type="chains" value="A/B=21-387"/>
</dbReference>
<dbReference type="PDB" id="3SWS">
    <property type="method" value="X-ray"/>
    <property type="resolution" value="1.86 A"/>
    <property type="chains" value="A/B=21-387"/>
</dbReference>
<dbReference type="PDB" id="3SXT">
    <property type="method" value="X-ray"/>
    <property type="resolution" value="1.81 A"/>
    <property type="chains" value="A/B=21-387"/>
</dbReference>
<dbReference type="PDB" id="4FA1">
    <property type="method" value="X-ray"/>
    <property type="resolution" value="2.18 A"/>
    <property type="chains" value="A/B=21-387"/>
</dbReference>
<dbReference type="PDB" id="4FA4">
    <property type="method" value="X-ray"/>
    <property type="resolution" value="2.14 A"/>
    <property type="chains" value="A/B=21-387"/>
</dbReference>
<dbReference type="PDB" id="4FA5">
    <property type="method" value="X-ray"/>
    <property type="resolution" value="1.94 A"/>
    <property type="chains" value="A/B=21-387"/>
</dbReference>
<dbReference type="PDB" id="4FA9">
    <property type="method" value="X-ray"/>
    <property type="resolution" value="2.09 A"/>
    <property type="chains" value="A/B=21-387"/>
</dbReference>
<dbReference type="PDB" id="4FAN">
    <property type="method" value="X-ray"/>
    <property type="resolution" value="2.08 A"/>
    <property type="chains" value="A/B=21-387"/>
</dbReference>
<dbReference type="PDB" id="4FAV">
    <property type="method" value="X-ray"/>
    <property type="resolution" value="2.08 A"/>
    <property type="chains" value="A/B=21-387"/>
</dbReference>
<dbReference type="PDB" id="4FB1">
    <property type="method" value="X-ray"/>
    <property type="resolution" value="2.15 A"/>
    <property type="chains" value="A/B=21-387"/>
</dbReference>
<dbReference type="PDB" id="4K3I">
    <property type="method" value="X-ray"/>
    <property type="resolution" value="2.00 A"/>
    <property type="chains" value="A/B=21-387"/>
</dbReference>
<dbReference type="PDB" id="4L1Q">
    <property type="method" value="X-ray"/>
    <property type="resolution" value="1.92 A"/>
    <property type="chains" value="A/B=21-387"/>
</dbReference>
<dbReference type="PDB" id="4L3G">
    <property type="method" value="X-ray"/>
    <property type="resolution" value="2.05 A"/>
    <property type="chains" value="A/B=21-387"/>
</dbReference>
<dbReference type="PDB" id="4L3H">
    <property type="method" value="X-ray"/>
    <property type="resolution" value="1.79 A"/>
    <property type="chains" value="A/B=21-387"/>
</dbReference>
<dbReference type="PDB" id="4O1Q">
    <property type="method" value="X-ray"/>
    <property type="resolution" value="2.59 A"/>
    <property type="chains" value="A/B=21-387"/>
</dbReference>
<dbReference type="PDB" id="4Y5R">
    <property type="method" value="X-ray"/>
    <property type="resolution" value="2.80 A"/>
    <property type="chains" value="A/B=26-380"/>
</dbReference>
<dbReference type="PDBsum" id="3L4M"/>
<dbReference type="PDBsum" id="3L4O"/>
<dbReference type="PDBsum" id="3ORV"/>
<dbReference type="PDBsum" id="3PXS"/>
<dbReference type="PDBsum" id="3PXT"/>
<dbReference type="PDBsum" id="3PXW"/>
<dbReference type="PDBsum" id="3RLM"/>
<dbReference type="PDBsum" id="3RMZ"/>
<dbReference type="PDBsum" id="3RN0"/>
<dbReference type="PDBsum" id="3RN1"/>
<dbReference type="PDBsum" id="3SJL"/>
<dbReference type="PDBsum" id="3SLE"/>
<dbReference type="PDBsum" id="3SVW"/>
<dbReference type="PDBsum" id="3SWS"/>
<dbReference type="PDBsum" id="3SXT"/>
<dbReference type="PDBsum" id="4FA1"/>
<dbReference type="PDBsum" id="4FA4"/>
<dbReference type="PDBsum" id="4FA5"/>
<dbReference type="PDBsum" id="4FA9"/>
<dbReference type="PDBsum" id="4FAN"/>
<dbReference type="PDBsum" id="4FAV"/>
<dbReference type="PDBsum" id="4FB1"/>
<dbReference type="PDBsum" id="4K3I"/>
<dbReference type="PDBsum" id="4L1Q"/>
<dbReference type="PDBsum" id="4L3G"/>
<dbReference type="PDBsum" id="4L3H"/>
<dbReference type="PDBsum" id="4O1Q"/>
<dbReference type="PDBsum" id="4Y5R"/>
<dbReference type="SMR" id="Q51658"/>
<dbReference type="IntAct" id="Q51658">
    <property type="interactions" value="1"/>
</dbReference>
<dbReference type="MINT" id="Q51658"/>
<dbReference type="PeroxiBase" id="3540">
    <property type="entry name" value="PdeMauG"/>
</dbReference>
<dbReference type="EnsemblBacteria" id="ABL72797">
    <property type="protein sequence ID" value="ABL72797"/>
    <property type="gene ID" value="Pden_4736"/>
</dbReference>
<dbReference type="GeneID" id="93454758"/>
<dbReference type="KEGG" id="pde:Pden_4736"/>
<dbReference type="eggNOG" id="COG1858">
    <property type="taxonomic scope" value="Bacteria"/>
</dbReference>
<dbReference type="HOGENOM" id="CLU_034652_0_1_5"/>
<dbReference type="OrthoDB" id="9805202at2"/>
<dbReference type="BRENDA" id="1.4.9.1">
    <property type="organism ID" value="3341"/>
</dbReference>
<dbReference type="UniPathway" id="UPA00895"/>
<dbReference type="EvolutionaryTrace" id="Q51658"/>
<dbReference type="Proteomes" id="UP000000361">
    <property type="component" value="Plasmid pPD1222"/>
</dbReference>
<dbReference type="GO" id="GO:0042597">
    <property type="term" value="C:periplasmic space"/>
    <property type="evidence" value="ECO:0007669"/>
    <property type="project" value="UniProtKB-SubCell"/>
</dbReference>
<dbReference type="GO" id="GO:0004130">
    <property type="term" value="F:cytochrome-c peroxidase activity"/>
    <property type="evidence" value="ECO:0007669"/>
    <property type="project" value="TreeGrafter"/>
</dbReference>
<dbReference type="GO" id="GO:0009055">
    <property type="term" value="F:electron transfer activity"/>
    <property type="evidence" value="ECO:0007669"/>
    <property type="project" value="InterPro"/>
</dbReference>
<dbReference type="GO" id="GO:0020037">
    <property type="term" value="F:heme binding"/>
    <property type="evidence" value="ECO:0007669"/>
    <property type="project" value="InterPro"/>
</dbReference>
<dbReference type="GO" id="GO:0046872">
    <property type="term" value="F:metal ion binding"/>
    <property type="evidence" value="ECO:0007669"/>
    <property type="project" value="UniProtKB-KW"/>
</dbReference>
<dbReference type="Gene3D" id="1.10.760.10">
    <property type="entry name" value="Cytochrome c-like domain"/>
    <property type="match status" value="2"/>
</dbReference>
<dbReference type="InterPro" id="IPR009056">
    <property type="entry name" value="Cyt_c-like_dom"/>
</dbReference>
<dbReference type="InterPro" id="IPR036909">
    <property type="entry name" value="Cyt_c-like_dom_sf"/>
</dbReference>
<dbReference type="InterPro" id="IPR051395">
    <property type="entry name" value="Cytochrome_c_Peroxidase/MauG"/>
</dbReference>
<dbReference type="InterPro" id="IPR004852">
    <property type="entry name" value="Di-haem_cyt_c_peroxidsae"/>
</dbReference>
<dbReference type="InterPro" id="IPR026259">
    <property type="entry name" value="MauG/Cytc_peroxidase"/>
</dbReference>
<dbReference type="PANTHER" id="PTHR30600:SF10">
    <property type="entry name" value="BLL6722 PROTEIN"/>
    <property type="match status" value="1"/>
</dbReference>
<dbReference type="PANTHER" id="PTHR30600">
    <property type="entry name" value="CYTOCHROME C PEROXIDASE-RELATED"/>
    <property type="match status" value="1"/>
</dbReference>
<dbReference type="Pfam" id="PF03150">
    <property type="entry name" value="CCP_MauG"/>
    <property type="match status" value="1"/>
</dbReference>
<dbReference type="PIRSF" id="PIRSF000294">
    <property type="entry name" value="Cytochrome-c_peroxidase"/>
    <property type="match status" value="1"/>
</dbReference>
<dbReference type="SUPFAM" id="SSF46626">
    <property type="entry name" value="Cytochrome c"/>
    <property type="match status" value="2"/>
</dbReference>
<dbReference type="PROSITE" id="PS51007">
    <property type="entry name" value="CYTC"/>
    <property type="match status" value="2"/>
</dbReference>
<evidence type="ECO:0000255" key="1"/>
<evidence type="ECO:0000255" key="2">
    <source>
        <dbReference type="PROSITE-ProRule" id="PRU00433"/>
    </source>
</evidence>
<evidence type="ECO:0000305" key="3"/>
<evidence type="ECO:0007829" key="4">
    <source>
        <dbReference type="PDB" id="3RMZ"/>
    </source>
</evidence>
<evidence type="ECO:0007829" key="5">
    <source>
        <dbReference type="PDB" id="3SJL"/>
    </source>
</evidence>
<evidence type="ECO:0007829" key="6">
    <source>
        <dbReference type="PDB" id="4L3H"/>
    </source>
</evidence>
<sequence length="387" mass="42230">MLRLACLAPLAILIPAAGTAEQARPADDALAALGAQLFVDPALSRNATQSCATCHDPARAFTDPREGKAGLAVSVGDDGQSHGDRNTPTLGYAALVPAFHRDANGKYKGGQFWDGRADDLKQQAGQPMLNPVEMAMPDRAAVAARLRDDPAYRTGFEALFGKGVLDDPERAFDAAAEALAAYQATGEFSPFDSKYDRVMRGEEKFTPLEEFGYTVFITWNCRLCHMQRKQGVAERETFTNFEYHNIGLPVNETAREASGLGADHVDHGLLARPGIEDPAQSGRFKVPSLRNVAVTGPYMHNGVFTDLRTAILFYNKYTSRRPEAKINPETGAPWGEPEVARNLSLAELQSGLMLDDGRVDALVAFLETLTDRRYEPLLEESRAAQKD</sequence>
<organism>
    <name type="scientific">Paracoccus denitrificans (strain Pd 1222)</name>
    <dbReference type="NCBI Taxonomy" id="318586"/>
    <lineage>
        <taxon>Bacteria</taxon>
        <taxon>Pseudomonadati</taxon>
        <taxon>Pseudomonadota</taxon>
        <taxon>Alphaproteobacteria</taxon>
        <taxon>Rhodobacterales</taxon>
        <taxon>Paracoccaceae</taxon>
        <taxon>Paracoccus</taxon>
    </lineage>
</organism>
<accession>Q51658</accession>
<accession>A1BBA3</accession>
<keyword id="KW-0002">3D-structure</keyword>
<keyword id="KW-0249">Electron transport</keyword>
<keyword id="KW-0349">Heme</keyword>
<keyword id="KW-0408">Iron</keyword>
<keyword id="KW-0479">Metal-binding</keyword>
<keyword id="KW-0560">Oxidoreductase</keyword>
<keyword id="KW-0574">Periplasm</keyword>
<keyword id="KW-0614">Plasmid</keyword>
<keyword id="KW-1185">Reference proteome</keyword>
<keyword id="KW-0732">Signal</keyword>
<keyword id="KW-0813">Transport</keyword>